<comment type="function">
    <text evidence="1 4">Facilitates degradation of misfolded endoplasmic reticulum (ER) proteins through the recruitment of components of the proteasome and endoplasmic reticulum-associated degradation (ERAD) system (By similarity). Involved in ER stress response (PubMed:18784250).</text>
</comment>
<comment type="subcellular location">
    <subcellularLocation>
        <location evidence="1">Endoplasmic reticulum membrane</location>
        <topology evidence="2">Multi-pass membrane protein</topology>
    </subcellularLocation>
</comment>
<comment type="alternative products">
    <event type="alternative splicing"/>
    <isoform>
        <id>G5EBX4-1</id>
        <name evidence="9">a</name>
        <sequence type="displayed"/>
    </isoform>
    <isoform>
        <id>G5EBX4-2</id>
        <name evidence="10">b</name>
        <sequence type="described" ref="VSP_061983 VSP_061984"/>
    </isoform>
</comment>
<keyword id="KW-0025">Alternative splicing</keyword>
<keyword id="KW-0256">Endoplasmic reticulum</keyword>
<keyword id="KW-0325">Glycoprotein</keyword>
<keyword id="KW-0472">Membrane</keyword>
<keyword id="KW-1185">Reference proteome</keyword>
<keyword id="KW-0812">Transmembrane</keyword>
<keyword id="KW-1133">Transmembrane helix</keyword>
<keyword id="KW-0834">Unfolded protein response</keyword>
<protein>
    <recommendedName>
        <fullName evidence="6">JNK1/MAPK8-associated membrane protein homolog</fullName>
    </recommendedName>
    <alternativeName>
        <fullName evidence="9">JAMP (JNK1-Associated Membrane Protein) homolog</fullName>
        <shortName evidence="5">JAMP</shortName>
    </alternativeName>
</protein>
<sequence length="326" mass="36854">MSSLSGHASTIQPSCLGFCGRTVLVGNYSEDVEATTTAAGSTSLSRCGPCSFGYRNNAMSICESCDTPLQPYDWMYLLFIALLPLLLHMQFIRIARKYCRTRYYEVSEYLCVILENVIACVIAVLIYPPRFTFFLNGCSKTDIKEWYPACYNPRIGYTKTMRCTYEVVFPLYSITFIHHLILIGSILVLRSTLYCVLLYKTYNGKPFYAAIVSVPILAVIHAVLSGVVFYTFPYILLIGSLWAMCFHLALEGKRPLKEMIVRIATSPTHLIFLSITMLMLSFGVIAIIAPLDIPYRWSFLCIVPVPFIFYMATIPFSNPTTTMRLS</sequence>
<gene>
    <name evidence="9" type="primary">jamp-1</name>
    <name evidence="7" type="synonym">5G528</name>
    <name evidence="9" type="ORF">R01B10.5</name>
</gene>
<reference evidence="8" key="1">
    <citation type="journal article" date="1998" name="Science">
        <title>Genome sequence of the nematode C. elegans: a platform for investigating biology.</title>
        <authorList>
            <consortium name="The C. elegans sequencing consortium"/>
        </authorList>
    </citation>
    <scope>NUCLEOTIDE SEQUENCE [LARGE SCALE GENOMIC DNA]</scope>
    <source>
        <strain evidence="8">Bristol N2</strain>
    </source>
</reference>
<reference evidence="7" key="2">
    <citation type="submission" date="2000-08" db="EMBL/GenBank/DDBJ databases">
        <title>The Caenorhabditis elegans transcriptome project, a complementary view of the genome.</title>
        <authorList>
            <person name="Kohara Y."/>
            <person name="Shin'i T."/>
            <person name="Suzuki Y."/>
            <person name="Sugano S."/>
            <person name="Potdevin M."/>
            <person name="Thierry-Mieg Y."/>
            <person name="Thierry-Mieg D."/>
            <person name="Thierry-Mieg J."/>
        </authorList>
    </citation>
    <scope>NUCLEOTIDE SEQUENCE [LARGE SCALE MRNA]</scope>
    <source>
        <strain evidence="7">Bristol N2</strain>
    </source>
</reference>
<reference evidence="6" key="3">
    <citation type="journal article" date="2008" name="Mol. Biol. Cell">
        <title>JAMP optimizes ERAD to protect cells from unfolded proteins.</title>
        <authorList>
            <person name="Tcherpakov M."/>
            <person name="Broday L."/>
            <person name="Delaunay A."/>
            <person name="Kadoya T."/>
            <person name="Khurana A."/>
            <person name="Erdjument-Bromage H."/>
            <person name="Tempst P."/>
            <person name="Qiu X.-B."/>
            <person name="DeMartino G.N."/>
            <person name="Ronai Z."/>
        </authorList>
    </citation>
    <scope>FUNCTION</scope>
</reference>
<organism evidence="8">
    <name type="scientific">Caenorhabditis elegans</name>
    <dbReference type="NCBI Taxonomy" id="6239"/>
    <lineage>
        <taxon>Eukaryota</taxon>
        <taxon>Metazoa</taxon>
        <taxon>Ecdysozoa</taxon>
        <taxon>Nematoda</taxon>
        <taxon>Chromadorea</taxon>
        <taxon>Rhabditida</taxon>
        <taxon>Rhabditina</taxon>
        <taxon>Rhabditomorpha</taxon>
        <taxon>Rhabditoidea</taxon>
        <taxon>Rhabditidae</taxon>
        <taxon>Peloderinae</taxon>
        <taxon>Caenorhabditis</taxon>
    </lineage>
</organism>
<proteinExistence type="evidence at transcript level"/>
<dbReference type="EMBL" id="BX284605">
    <property type="protein sequence ID" value="CCD70268.1"/>
    <property type="molecule type" value="Genomic_DNA"/>
</dbReference>
<dbReference type="EMBL" id="BX284605">
    <property type="protein sequence ID" value="VGM69581.1"/>
    <property type="molecule type" value="Genomic_DNA"/>
</dbReference>
<dbReference type="EMBL" id="AF304119">
    <property type="protein sequence ID" value="AAG50232.1"/>
    <property type="molecule type" value="mRNA"/>
</dbReference>
<dbReference type="PIR" id="T33304">
    <property type="entry name" value="T33304"/>
</dbReference>
<dbReference type="RefSeq" id="NP_001360559.1">
    <molecule id="G5EBX4-2"/>
    <property type="nucleotide sequence ID" value="NM_001373030.1"/>
</dbReference>
<dbReference type="RefSeq" id="NP_504568.1">
    <molecule id="G5EBX4-1"/>
    <property type="nucleotide sequence ID" value="NM_072167.8"/>
</dbReference>
<dbReference type="FunCoup" id="G5EBX4">
    <property type="interactions" value="2029"/>
</dbReference>
<dbReference type="STRING" id="6239.R01B10.5.1"/>
<dbReference type="PaxDb" id="6239-R01B10.5"/>
<dbReference type="EnsemblMetazoa" id="R01B10.5a.1">
    <molecule id="G5EBX4-1"/>
    <property type="protein sequence ID" value="R01B10.5a.1"/>
    <property type="gene ID" value="WBGene00019807"/>
</dbReference>
<dbReference type="EnsemblMetazoa" id="R01B10.5b.1">
    <molecule id="G5EBX4-2"/>
    <property type="protein sequence ID" value="R01B10.5b.1"/>
    <property type="gene ID" value="WBGene00019807"/>
</dbReference>
<dbReference type="GeneID" id="178993"/>
<dbReference type="KEGG" id="cel:CELE_R01B10.5"/>
<dbReference type="AGR" id="WB:WBGene00019807"/>
<dbReference type="CTD" id="178993"/>
<dbReference type="WormBase" id="R01B10.5a">
    <molecule id="G5EBX4-1"/>
    <property type="protein sequence ID" value="CE26750"/>
    <property type="gene ID" value="WBGene00019807"/>
    <property type="gene designation" value="jamp-1"/>
</dbReference>
<dbReference type="WormBase" id="R01B10.5b">
    <molecule id="G5EBX4-2"/>
    <property type="protein sequence ID" value="CE52972"/>
    <property type="gene ID" value="WBGene00019807"/>
    <property type="gene designation" value="jamp-1"/>
</dbReference>
<dbReference type="eggNOG" id="KOG3744">
    <property type="taxonomic scope" value="Eukaryota"/>
</dbReference>
<dbReference type="GeneTree" id="ENSGT00390000018097"/>
<dbReference type="HOGENOM" id="CLU_062918_1_0_1"/>
<dbReference type="OMA" id="CPGIYCG"/>
<dbReference type="OrthoDB" id="5920264at2759"/>
<dbReference type="PRO" id="PR:G5EBX4"/>
<dbReference type="Proteomes" id="UP000001940">
    <property type="component" value="Chromosome V"/>
</dbReference>
<dbReference type="Bgee" id="WBGene00019807">
    <property type="expression patterns" value="Expressed in pharyngeal muscle cell (C elegans) and 4 other cell types or tissues"/>
</dbReference>
<dbReference type="ExpressionAtlas" id="G5EBX4">
    <property type="expression patterns" value="baseline and differential"/>
</dbReference>
<dbReference type="GO" id="GO:0005789">
    <property type="term" value="C:endoplasmic reticulum membrane"/>
    <property type="evidence" value="ECO:0007669"/>
    <property type="project" value="UniProtKB-SubCell"/>
</dbReference>
<dbReference type="GO" id="GO:0031625">
    <property type="term" value="F:ubiquitin protein ligase binding"/>
    <property type="evidence" value="ECO:0000318"/>
    <property type="project" value="GO_Central"/>
</dbReference>
<dbReference type="GO" id="GO:0036503">
    <property type="term" value="P:ERAD pathway"/>
    <property type="evidence" value="ECO:0000318"/>
    <property type="project" value="GO_Central"/>
</dbReference>
<dbReference type="GO" id="GO:0006986">
    <property type="term" value="P:response to unfolded protein"/>
    <property type="evidence" value="ECO:0007669"/>
    <property type="project" value="UniProtKB-KW"/>
</dbReference>
<dbReference type="InterPro" id="IPR008485">
    <property type="entry name" value="JAMP"/>
</dbReference>
<dbReference type="PANTHER" id="PTHR12740">
    <property type="entry name" value="JNK1/MAPK8-ASSOCIATED MEMBRANE PROTEIN"/>
    <property type="match status" value="1"/>
</dbReference>
<dbReference type="PANTHER" id="PTHR12740:SF4">
    <property type="entry name" value="JNK1_MAPK8-ASSOCIATED MEMBRANE PROTEIN"/>
    <property type="match status" value="1"/>
</dbReference>
<dbReference type="Pfam" id="PF05571">
    <property type="entry name" value="JAMP"/>
    <property type="match status" value="1"/>
</dbReference>
<evidence type="ECO:0000250" key="1">
    <source>
        <dbReference type="UniProtKB" id="Q8BI36"/>
    </source>
</evidence>
<evidence type="ECO:0000255" key="2"/>
<evidence type="ECO:0000255" key="3">
    <source>
        <dbReference type="PROSITE-ProRule" id="PRU00498"/>
    </source>
</evidence>
<evidence type="ECO:0000269" key="4">
    <source>
    </source>
</evidence>
<evidence type="ECO:0000303" key="5">
    <source>
    </source>
</evidence>
<evidence type="ECO:0000305" key="6"/>
<evidence type="ECO:0000312" key="7">
    <source>
        <dbReference type="EMBL" id="AAG50232.1"/>
    </source>
</evidence>
<evidence type="ECO:0000312" key="8">
    <source>
        <dbReference type="Proteomes" id="UP000001940"/>
    </source>
</evidence>
<evidence type="ECO:0000312" key="9">
    <source>
        <dbReference type="WormBase" id="R01B10.5a"/>
    </source>
</evidence>
<evidence type="ECO:0000312" key="10">
    <source>
        <dbReference type="WormBase" id="R01B10.5b"/>
    </source>
</evidence>
<accession>G5EBX4</accession>
<accession>A0A486WXK6</accession>
<feature type="chain" id="PRO_0000458859" description="JNK1/MAPK8-associated membrane protein homolog">
    <location>
        <begin position="1"/>
        <end position="326"/>
    </location>
</feature>
<feature type="topological domain" description="Lumenal" evidence="6">
    <location>
        <begin position="1"/>
        <end position="71"/>
    </location>
</feature>
<feature type="transmembrane region" description="Helical" evidence="2">
    <location>
        <begin position="72"/>
        <end position="92"/>
    </location>
</feature>
<feature type="topological domain" description="Cytoplasmic" evidence="6">
    <location>
        <begin position="93"/>
        <end position="108"/>
    </location>
</feature>
<feature type="transmembrane region" description="Helical" evidence="2">
    <location>
        <begin position="109"/>
        <end position="129"/>
    </location>
</feature>
<feature type="topological domain" description="Lumenal" evidence="6">
    <location>
        <begin position="130"/>
        <end position="166"/>
    </location>
</feature>
<feature type="transmembrane region" description="Helical" evidence="2">
    <location>
        <begin position="167"/>
        <end position="187"/>
    </location>
</feature>
<feature type="topological domain" description="Cytoplasmic" evidence="6">
    <location>
        <begin position="188"/>
        <end position="208"/>
    </location>
</feature>
<feature type="transmembrane region" description="Helical" evidence="2">
    <location>
        <begin position="209"/>
        <end position="229"/>
    </location>
</feature>
<feature type="transmembrane region" description="Helical" evidence="2">
    <location>
        <begin position="230"/>
        <end position="250"/>
    </location>
</feature>
<feature type="topological domain" description="Cytoplasmic" evidence="6">
    <location>
        <begin position="251"/>
        <end position="269"/>
    </location>
</feature>
<feature type="transmembrane region" description="Helical" evidence="2">
    <location>
        <begin position="270"/>
        <end position="290"/>
    </location>
</feature>
<feature type="topological domain" description="Lumenal" evidence="6">
    <location>
        <begin position="291"/>
        <end position="296"/>
    </location>
</feature>
<feature type="transmembrane region" description="Helical" evidence="2">
    <location>
        <begin position="297"/>
        <end position="317"/>
    </location>
</feature>
<feature type="topological domain" description="Cytoplasmic" evidence="6">
    <location>
        <begin position="318"/>
        <end position="326"/>
    </location>
</feature>
<feature type="glycosylation site" description="N-linked (GlcNAc...) asparagine" evidence="3">
    <location>
        <position position="27"/>
    </location>
</feature>
<feature type="splice variant" id="VSP_061983" description="In isoform b.">
    <original>DIPYRWSFLCIVPV</original>
    <variation>IIPETSHTVGHSFV</variation>
    <location>
        <begin position="292"/>
        <end position="305"/>
    </location>
</feature>
<feature type="splice variant" id="VSP_061984" description="In isoform b.">
    <location>
        <begin position="306"/>
        <end position="326"/>
    </location>
</feature>
<name>JKAMP_CAEEL</name>